<gene>
    <name type="primary">ND4L</name>
    <name type="synonym">NAD4L</name>
    <name type="synonym">NADH4L</name>
</gene>
<protein>
    <recommendedName>
        <fullName>NADH-ubiquinone oxidoreductase chain 4L</fullName>
        <ecNumber>7.1.1.2</ecNumber>
    </recommendedName>
    <alternativeName>
        <fullName>NADH dehydrogenase subunit 4L</fullName>
    </alternativeName>
</protein>
<name>NU4LM_BRAFL</name>
<accession>P69238</accession>
<accession>O47424</accession>
<accession>O79420</accession>
<organism>
    <name type="scientific">Branchiostoma floridae</name>
    <name type="common">Florida lancelet</name>
    <name type="synonym">Amphioxus</name>
    <dbReference type="NCBI Taxonomy" id="7739"/>
    <lineage>
        <taxon>Eukaryota</taxon>
        <taxon>Metazoa</taxon>
        <taxon>Chordata</taxon>
        <taxon>Cephalochordata</taxon>
        <taxon>Leptocardii</taxon>
        <taxon>Amphioxiformes</taxon>
        <taxon>Branchiostomatidae</taxon>
        <taxon>Branchiostoma</taxon>
    </lineage>
</organism>
<proteinExistence type="inferred from homology"/>
<dbReference type="EC" id="7.1.1.2"/>
<dbReference type="EMBL" id="AF098298">
    <property type="protein sequence ID" value="AAB87993.2"/>
    <property type="molecule type" value="Genomic_DNA"/>
</dbReference>
<dbReference type="RefSeq" id="NP_007763.1">
    <property type="nucleotide sequence ID" value="NC_000834.1"/>
</dbReference>
<dbReference type="SMR" id="P69238"/>
<dbReference type="FunCoup" id="P69238">
    <property type="interactions" value="29"/>
</dbReference>
<dbReference type="STRING" id="7739.P69238"/>
<dbReference type="GeneID" id="808732"/>
<dbReference type="KEGG" id="bfo:808732"/>
<dbReference type="CTD" id="4539"/>
<dbReference type="InParanoid" id="P69238"/>
<dbReference type="OMA" id="MYRSHLM"/>
<dbReference type="OrthoDB" id="6146597at2759"/>
<dbReference type="Proteomes" id="UP000001554">
    <property type="component" value="Mitochondrion MT"/>
</dbReference>
<dbReference type="GO" id="GO:0031966">
    <property type="term" value="C:mitochondrial membrane"/>
    <property type="evidence" value="ECO:0007669"/>
    <property type="project" value="UniProtKB-SubCell"/>
</dbReference>
<dbReference type="GO" id="GO:0045271">
    <property type="term" value="C:respiratory chain complex I"/>
    <property type="evidence" value="ECO:0000318"/>
    <property type="project" value="GO_Central"/>
</dbReference>
<dbReference type="GO" id="GO:0008137">
    <property type="term" value="F:NADH dehydrogenase (ubiquinone) activity"/>
    <property type="evidence" value="ECO:0007669"/>
    <property type="project" value="UniProtKB-EC"/>
</dbReference>
<dbReference type="Gene3D" id="1.10.287.3510">
    <property type="match status" value="1"/>
</dbReference>
<dbReference type="InterPro" id="IPR039428">
    <property type="entry name" value="NUOK/Mnh_C1-like"/>
</dbReference>
<dbReference type="Pfam" id="PF00420">
    <property type="entry name" value="Oxidored_q2"/>
    <property type="match status" value="1"/>
</dbReference>
<geneLocation type="mitochondrion"/>
<feature type="chain" id="PRO_0000118397" description="NADH-ubiquinone oxidoreductase chain 4L">
    <location>
        <begin position="1"/>
        <end position="91"/>
    </location>
</feature>
<feature type="transmembrane region" description="Helical" evidence="2">
    <location>
        <begin position="2"/>
        <end position="22"/>
    </location>
</feature>
<feature type="transmembrane region" description="Helical" evidence="2">
    <location>
        <begin position="38"/>
        <end position="58"/>
    </location>
</feature>
<keyword id="KW-0249">Electron transport</keyword>
<keyword id="KW-0472">Membrane</keyword>
<keyword id="KW-0496">Mitochondrion</keyword>
<keyword id="KW-0520">NAD</keyword>
<keyword id="KW-1185">Reference proteome</keyword>
<keyword id="KW-0679">Respiratory chain</keyword>
<keyword id="KW-1278">Translocase</keyword>
<keyword id="KW-0812">Transmembrane</keyword>
<keyword id="KW-1133">Transmembrane helix</keyword>
<keyword id="KW-0813">Transport</keyword>
<keyword id="KW-0830">Ubiquinone</keyword>
<sequence>MLIMILIFLIALLGLGLSQTHLLSVLLCLEMMMVSLYLGLGMVSISGLHYPLMIALVLLTFSACEASSGLALLVLISRSHGSDLLKSFNLS</sequence>
<comment type="function">
    <text evidence="1">Core subunit of the mitochondrial membrane respiratory chain NADH dehydrogenase (Complex I) that is believed to belong to the minimal assembly required for catalysis. Complex I functions in the transfer of electrons from NADH to the respiratory chain. The immediate electron acceptor for the enzyme is believed to be ubiquinone (By similarity).</text>
</comment>
<comment type="catalytic activity">
    <reaction>
        <text>a ubiquinone + NADH + 5 H(+)(in) = a ubiquinol + NAD(+) + 4 H(+)(out)</text>
        <dbReference type="Rhea" id="RHEA:29091"/>
        <dbReference type="Rhea" id="RHEA-COMP:9565"/>
        <dbReference type="Rhea" id="RHEA-COMP:9566"/>
        <dbReference type="ChEBI" id="CHEBI:15378"/>
        <dbReference type="ChEBI" id="CHEBI:16389"/>
        <dbReference type="ChEBI" id="CHEBI:17976"/>
        <dbReference type="ChEBI" id="CHEBI:57540"/>
        <dbReference type="ChEBI" id="CHEBI:57945"/>
        <dbReference type="EC" id="7.1.1.2"/>
    </reaction>
</comment>
<comment type="subcellular location">
    <subcellularLocation>
        <location evidence="1">Mitochondrion membrane</location>
        <topology evidence="1">Multi-pass membrane protein</topology>
    </subcellularLocation>
</comment>
<comment type="similarity">
    <text evidence="3">Belongs to the complex I subunit 4L family.</text>
</comment>
<evidence type="ECO:0000250" key="1"/>
<evidence type="ECO:0000255" key="2"/>
<evidence type="ECO:0000305" key="3"/>
<evidence type="ECO:0000312" key="4">
    <source>
        <dbReference type="Proteomes" id="UP000001554"/>
    </source>
</evidence>
<reference key="1">
    <citation type="journal article" date="1999" name="Mol. Biol. Evol.">
        <title>Complete sequence, gene arrangement, and genetic code of mitochondrial DNA of the cephalochordate Branchiostoma floridae (Amphioxus).</title>
        <authorList>
            <person name="Boore J.L."/>
            <person name="Daehler L.L."/>
            <person name="Brown W.M."/>
        </authorList>
    </citation>
    <scope>NUCLEOTIDE SEQUENCE [LARGE SCALE GENOMIC DNA]</scope>
    <source>
        <strain evidence="4">S238N-H82</strain>
    </source>
</reference>